<dbReference type="EMBL" id="AP009510">
    <property type="protein sequence ID" value="BAG14055.1"/>
    <property type="molecule type" value="Genomic_DNA"/>
</dbReference>
<dbReference type="RefSeq" id="WP_015423580.1">
    <property type="nucleotide sequence ID" value="NC_020419.1"/>
</dbReference>
<dbReference type="SMR" id="B1H0M3"/>
<dbReference type="STRING" id="471821.TGRD_572"/>
<dbReference type="KEGG" id="eti:RSTT_538"/>
<dbReference type="KEGG" id="rsd:TGRD_572"/>
<dbReference type="PATRIC" id="fig|471821.5.peg.935"/>
<dbReference type="HOGENOM" id="CLU_050012_0_1_0"/>
<dbReference type="OrthoDB" id="9774769at2"/>
<dbReference type="Proteomes" id="UP000001691">
    <property type="component" value="Chromosome"/>
</dbReference>
<dbReference type="GO" id="GO:0005886">
    <property type="term" value="C:plasma membrane"/>
    <property type="evidence" value="ECO:0007669"/>
    <property type="project" value="UniProtKB-SubCell"/>
</dbReference>
<dbReference type="GO" id="GO:0015450">
    <property type="term" value="F:protein-transporting ATPase activity"/>
    <property type="evidence" value="ECO:0007669"/>
    <property type="project" value="InterPro"/>
</dbReference>
<dbReference type="GO" id="GO:0065002">
    <property type="term" value="P:intracellular protein transmembrane transport"/>
    <property type="evidence" value="ECO:0007669"/>
    <property type="project" value="UniProtKB-UniRule"/>
</dbReference>
<dbReference type="GO" id="GO:0006605">
    <property type="term" value="P:protein targeting"/>
    <property type="evidence" value="ECO:0007669"/>
    <property type="project" value="UniProtKB-UniRule"/>
</dbReference>
<dbReference type="GO" id="GO:0043952">
    <property type="term" value="P:protein transport by the Sec complex"/>
    <property type="evidence" value="ECO:0007669"/>
    <property type="project" value="UniProtKB-UniRule"/>
</dbReference>
<dbReference type="Gene3D" id="1.20.1640.10">
    <property type="entry name" value="Multidrug efflux transporter AcrB transmembrane domain"/>
    <property type="match status" value="1"/>
</dbReference>
<dbReference type="HAMAP" id="MF_01464_B">
    <property type="entry name" value="SecF_B"/>
    <property type="match status" value="1"/>
</dbReference>
<dbReference type="InterPro" id="IPR022813">
    <property type="entry name" value="SecD/SecF_arch_bac"/>
</dbReference>
<dbReference type="InterPro" id="IPR022645">
    <property type="entry name" value="SecD/SecF_bac"/>
</dbReference>
<dbReference type="InterPro" id="IPR022646">
    <property type="entry name" value="SecD/SecF_CS"/>
</dbReference>
<dbReference type="InterPro" id="IPR048634">
    <property type="entry name" value="SecD_SecF_C"/>
</dbReference>
<dbReference type="InterPro" id="IPR055344">
    <property type="entry name" value="SecD_SecF_C_bact"/>
</dbReference>
<dbReference type="InterPro" id="IPR005665">
    <property type="entry name" value="SecF_bac"/>
</dbReference>
<dbReference type="NCBIfam" id="TIGR00916">
    <property type="entry name" value="2A0604s01"/>
    <property type="match status" value="1"/>
</dbReference>
<dbReference type="NCBIfam" id="TIGR00966">
    <property type="entry name" value="transloc_SecF"/>
    <property type="match status" value="1"/>
</dbReference>
<dbReference type="PANTHER" id="PTHR30081:SF8">
    <property type="entry name" value="PROTEIN TRANSLOCASE SUBUNIT SECF"/>
    <property type="match status" value="1"/>
</dbReference>
<dbReference type="PANTHER" id="PTHR30081">
    <property type="entry name" value="PROTEIN-EXPORT MEMBRANE PROTEIN SEC"/>
    <property type="match status" value="1"/>
</dbReference>
<dbReference type="Pfam" id="PF07549">
    <property type="entry name" value="Sec_GG"/>
    <property type="match status" value="1"/>
</dbReference>
<dbReference type="Pfam" id="PF02355">
    <property type="entry name" value="SecD_SecF_C"/>
    <property type="match status" value="1"/>
</dbReference>
<dbReference type="PRINTS" id="PR01755">
    <property type="entry name" value="SECFTRNLCASE"/>
</dbReference>
<dbReference type="SUPFAM" id="SSF82866">
    <property type="entry name" value="Multidrug efflux transporter AcrB transmembrane domain"/>
    <property type="match status" value="1"/>
</dbReference>
<comment type="function">
    <text evidence="1">Part of the Sec protein translocase complex. Interacts with the SecYEG preprotein conducting channel. SecDF uses the proton motive force (PMF) to complete protein translocation after the ATP-dependent function of SecA.</text>
</comment>
<comment type="subunit">
    <text evidence="1">Forms a complex with SecD. Part of the essential Sec protein translocation apparatus which comprises SecA, SecYEG and auxiliary proteins SecDF. Other proteins may also be involved.</text>
</comment>
<comment type="subcellular location">
    <subcellularLocation>
        <location evidence="1">Cell inner membrane</location>
        <topology evidence="1">Multi-pass membrane protein</topology>
    </subcellularLocation>
</comment>
<comment type="similarity">
    <text evidence="1">Belongs to the SecD/SecF family. SecF subfamily.</text>
</comment>
<accession>B1H0M3</accession>
<evidence type="ECO:0000255" key="1">
    <source>
        <dbReference type="HAMAP-Rule" id="MF_01464"/>
    </source>
</evidence>
<proteinExistence type="inferred from homology"/>
<reference key="1">
    <citation type="journal article" date="2008" name="Proc. Natl. Acad. Sci. U.S.A.">
        <title>Complete genome of the uncultured termite group 1 bacteria in a single host protist cell.</title>
        <authorList>
            <person name="Hongoh Y."/>
            <person name="Sharma V.K."/>
            <person name="Prakash T."/>
            <person name="Noda S."/>
            <person name="Taylor T.D."/>
            <person name="Kudo T."/>
            <person name="Sakaki Y."/>
            <person name="Toyoda A."/>
            <person name="Hattori M."/>
            <person name="Ohkuma M."/>
        </authorList>
    </citation>
    <scope>NUCLEOTIDE SEQUENCE [LARGE SCALE GENOMIC DNA]</scope>
</reference>
<gene>
    <name evidence="1" type="primary">secF</name>
    <name type="ordered locus">TGRD_572</name>
</gene>
<sequence length="310" mass="34806">MRFFRSVDIDFIGNRYKFFTISGLLLLLTVGAFIYRGGLNYGIDFTGGILMRISFQNEVGLQDVRIAVEESGINSFELQSSGNLVMIRIKKDLEAQEEFETLIKSSIQLRFPDNPVKIEGIEYIGPTVGEYLSKQAVYAFLFAFLVMIVYVAFRFKSSLWGIVSVVGIIHDIVISLGFVILANKEINITIVAALLTVVGYSINDTIVLFDRIKENLKLLVKEDFVAVINKSINEVLVRTIVTSLTVFIVACSLFFFGGEVMHTFAYIMIIGTVLGVFSTIFVCAPLICEWRIKTNKRLKIAIKQDGVRSK</sequence>
<keyword id="KW-0997">Cell inner membrane</keyword>
<keyword id="KW-1003">Cell membrane</keyword>
<keyword id="KW-0472">Membrane</keyword>
<keyword id="KW-0653">Protein transport</keyword>
<keyword id="KW-0811">Translocation</keyword>
<keyword id="KW-0812">Transmembrane</keyword>
<keyword id="KW-1133">Transmembrane helix</keyword>
<keyword id="KW-0813">Transport</keyword>
<name>SECF_ENDTX</name>
<organism>
    <name type="scientific">Endomicrobium trichonymphae</name>
    <dbReference type="NCBI Taxonomy" id="1408204"/>
    <lineage>
        <taxon>Bacteria</taxon>
        <taxon>Pseudomonadati</taxon>
        <taxon>Elusimicrobiota</taxon>
        <taxon>Endomicrobiia</taxon>
        <taxon>Endomicrobiales</taxon>
        <taxon>Endomicrobiaceae</taxon>
        <taxon>Candidatus Endomicrobiellum</taxon>
    </lineage>
</organism>
<feature type="chain" id="PRO_0000412706" description="Protein translocase subunit SecF">
    <location>
        <begin position="1"/>
        <end position="310"/>
    </location>
</feature>
<feature type="transmembrane region" description="Helical" evidence="1">
    <location>
        <begin position="18"/>
        <end position="38"/>
    </location>
</feature>
<feature type="transmembrane region" description="Helical" evidence="1">
    <location>
        <begin position="135"/>
        <end position="155"/>
    </location>
</feature>
<feature type="transmembrane region" description="Helical" evidence="1">
    <location>
        <begin position="162"/>
        <end position="182"/>
    </location>
</feature>
<feature type="transmembrane region" description="Helical" evidence="1">
    <location>
        <begin position="188"/>
        <end position="208"/>
    </location>
</feature>
<feature type="transmembrane region" description="Helical" evidence="1">
    <location>
        <begin position="240"/>
        <end position="260"/>
    </location>
</feature>
<feature type="transmembrane region" description="Helical" evidence="1">
    <location>
        <begin position="267"/>
        <end position="287"/>
    </location>
</feature>
<protein>
    <recommendedName>
        <fullName>Protein translocase subunit SecF</fullName>
    </recommendedName>
</protein>